<protein>
    <recommendedName>
        <fullName evidence="1">Nickel import system permease protein NikC</fullName>
    </recommendedName>
</protein>
<feature type="chain" id="PRO_0000276787" description="Nickel import system permease protein NikC">
    <location>
        <begin position="1"/>
        <end position="276"/>
    </location>
</feature>
<feature type="transmembrane region" description="Helical" evidence="2">
    <location>
        <begin position="10"/>
        <end position="30"/>
    </location>
</feature>
<feature type="transmembrane region" description="Helical" evidence="2">
    <location>
        <begin position="73"/>
        <end position="93"/>
    </location>
</feature>
<feature type="transmembrane region" description="Helical" evidence="2">
    <location>
        <begin position="108"/>
        <end position="128"/>
    </location>
</feature>
<feature type="transmembrane region" description="Helical" evidence="2">
    <location>
        <begin position="186"/>
        <end position="206"/>
    </location>
</feature>
<feature type="transmembrane region" description="Helical" evidence="2">
    <location>
        <begin position="238"/>
        <end position="258"/>
    </location>
</feature>
<feature type="domain" description="ABC transmembrane type-1" evidence="2">
    <location>
        <begin position="69"/>
        <end position="258"/>
    </location>
</feature>
<sequence>MHKIFSKNNLIFFVFVAFIFVVIVLQFFVSSENATKVNLSQTFEPISWLHLLGTDDYGRDLFTRIIIGARSTLFVTVLTLIAIVVIGVTLGLFAGYKKGWIERLVLRFIDVGLSIPEFIIMIALASFFQPSLWNLVISITVIKWMNYTRLTRSIVNSEMNKPYIKMAQLFHVPTRTILIRHLTPKIIPAIIVLMVVDFGKIILYISSLSFIGLGAQPPTPEWGAMLQQGRDFISSHPIMLIAPASVIAITILIFNLTGDALRDRLLKQRGEYDESH</sequence>
<gene>
    <name evidence="1" type="primary">nikC</name>
    <name type="synonym">oppC2</name>
    <name type="ordered locus">SAV1381</name>
</gene>
<name>NIKC_STAAM</name>
<keyword id="KW-1003">Cell membrane</keyword>
<keyword id="KW-0406">Ion transport</keyword>
<keyword id="KW-0472">Membrane</keyword>
<keyword id="KW-0533">Nickel</keyword>
<keyword id="KW-0921">Nickel transport</keyword>
<keyword id="KW-0812">Transmembrane</keyword>
<keyword id="KW-1133">Transmembrane helix</keyword>
<keyword id="KW-0813">Transport</keyword>
<reference key="1">
    <citation type="journal article" date="2001" name="Lancet">
        <title>Whole genome sequencing of meticillin-resistant Staphylococcus aureus.</title>
        <authorList>
            <person name="Kuroda M."/>
            <person name="Ohta T."/>
            <person name="Uchiyama I."/>
            <person name="Baba T."/>
            <person name="Yuzawa H."/>
            <person name="Kobayashi I."/>
            <person name="Cui L."/>
            <person name="Oguchi A."/>
            <person name="Aoki K."/>
            <person name="Nagai Y."/>
            <person name="Lian J.-Q."/>
            <person name="Ito T."/>
            <person name="Kanamori M."/>
            <person name="Matsumaru H."/>
            <person name="Maruyama A."/>
            <person name="Murakami H."/>
            <person name="Hosoyama A."/>
            <person name="Mizutani-Ui Y."/>
            <person name="Takahashi N.K."/>
            <person name="Sawano T."/>
            <person name="Inoue R."/>
            <person name="Kaito C."/>
            <person name="Sekimizu K."/>
            <person name="Hirakawa H."/>
            <person name="Kuhara S."/>
            <person name="Goto S."/>
            <person name="Yabuzaki J."/>
            <person name="Kanehisa M."/>
            <person name="Yamashita A."/>
            <person name="Oshima K."/>
            <person name="Furuya K."/>
            <person name="Yoshino C."/>
            <person name="Shiba T."/>
            <person name="Hattori M."/>
            <person name="Ogasawara N."/>
            <person name="Hayashi H."/>
            <person name="Hiramatsu K."/>
        </authorList>
    </citation>
    <scope>NUCLEOTIDE SEQUENCE [LARGE SCALE GENOMIC DNA]</scope>
    <source>
        <strain>Mu50 / ATCC 700699</strain>
    </source>
</reference>
<dbReference type="EMBL" id="BA000017">
    <property type="protein sequence ID" value="BAB57543.1"/>
    <property type="molecule type" value="Genomic_DNA"/>
</dbReference>
<dbReference type="RefSeq" id="WP_000548936.1">
    <property type="nucleotide sequence ID" value="NC_002758.2"/>
</dbReference>
<dbReference type="SMR" id="Q99UA1"/>
<dbReference type="KEGG" id="sav:SAV1381"/>
<dbReference type="HOGENOM" id="CLU_028518_5_3_9"/>
<dbReference type="PhylomeDB" id="Q99UA1"/>
<dbReference type="Proteomes" id="UP000002481">
    <property type="component" value="Chromosome"/>
</dbReference>
<dbReference type="GO" id="GO:0005886">
    <property type="term" value="C:plasma membrane"/>
    <property type="evidence" value="ECO:0007669"/>
    <property type="project" value="UniProtKB-SubCell"/>
</dbReference>
<dbReference type="GO" id="GO:0015675">
    <property type="term" value="P:nickel cation transport"/>
    <property type="evidence" value="ECO:0007669"/>
    <property type="project" value="UniProtKB-KW"/>
</dbReference>
<dbReference type="GO" id="GO:0055085">
    <property type="term" value="P:transmembrane transport"/>
    <property type="evidence" value="ECO:0007669"/>
    <property type="project" value="InterPro"/>
</dbReference>
<dbReference type="CDD" id="cd06261">
    <property type="entry name" value="TM_PBP2"/>
    <property type="match status" value="1"/>
</dbReference>
<dbReference type="Gene3D" id="1.10.3720.10">
    <property type="entry name" value="MetI-like"/>
    <property type="match status" value="1"/>
</dbReference>
<dbReference type="InterPro" id="IPR053385">
    <property type="entry name" value="ABC_transport_permease"/>
</dbReference>
<dbReference type="InterPro" id="IPR050366">
    <property type="entry name" value="BP-dependent_transpt_permease"/>
</dbReference>
<dbReference type="InterPro" id="IPR000515">
    <property type="entry name" value="MetI-like"/>
</dbReference>
<dbReference type="InterPro" id="IPR035906">
    <property type="entry name" value="MetI-like_sf"/>
</dbReference>
<dbReference type="NCBIfam" id="NF045474">
    <property type="entry name" value="Opp2C"/>
    <property type="match status" value="1"/>
</dbReference>
<dbReference type="PANTHER" id="PTHR43386:SF1">
    <property type="entry name" value="D,D-DIPEPTIDE TRANSPORT SYSTEM PERMEASE PROTEIN DDPC-RELATED"/>
    <property type="match status" value="1"/>
</dbReference>
<dbReference type="PANTHER" id="PTHR43386">
    <property type="entry name" value="OLIGOPEPTIDE TRANSPORT SYSTEM PERMEASE PROTEIN APPC"/>
    <property type="match status" value="1"/>
</dbReference>
<dbReference type="Pfam" id="PF00528">
    <property type="entry name" value="BPD_transp_1"/>
    <property type="match status" value="1"/>
</dbReference>
<dbReference type="SUPFAM" id="SSF161098">
    <property type="entry name" value="MetI-like"/>
    <property type="match status" value="1"/>
</dbReference>
<dbReference type="PROSITE" id="PS50928">
    <property type="entry name" value="ABC_TM1"/>
    <property type="match status" value="1"/>
</dbReference>
<accession>Q99UA1</accession>
<evidence type="ECO:0000250" key="1">
    <source>
        <dbReference type="UniProtKB" id="Q2FYQ6"/>
    </source>
</evidence>
<evidence type="ECO:0000255" key="2">
    <source>
        <dbReference type="PROSITE-ProRule" id="PRU00441"/>
    </source>
</evidence>
<evidence type="ECO:0000305" key="3"/>
<organism>
    <name type="scientific">Staphylococcus aureus (strain Mu50 / ATCC 700699)</name>
    <dbReference type="NCBI Taxonomy" id="158878"/>
    <lineage>
        <taxon>Bacteria</taxon>
        <taxon>Bacillati</taxon>
        <taxon>Bacillota</taxon>
        <taxon>Bacilli</taxon>
        <taxon>Bacillales</taxon>
        <taxon>Staphylococcaceae</taxon>
        <taxon>Staphylococcus</taxon>
    </lineage>
</organism>
<proteinExistence type="inferred from homology"/>
<comment type="function">
    <text evidence="1">Part of the ABC transporter complex NikABCDE (Opp2) involved in nickel import. Probably responsible for the translocation of the substrate across the membrane.</text>
</comment>
<comment type="subunit">
    <text evidence="1">The complex is composed of two ATP-binding proteins (NikD and NikE), two transmembrane proteins (NikB and NikC) and a solute-binding protein (NikA).</text>
</comment>
<comment type="subcellular location">
    <subcellularLocation>
        <location evidence="3">Cell membrane</location>
        <topology evidence="2">Multi-pass membrane protein</topology>
    </subcellularLocation>
</comment>
<comment type="similarity">
    <text evidence="3">Belongs to the binding-protein-dependent transport system permease family. OppBC subfamily.</text>
</comment>